<sequence>MNSAVQAQLAELGIEGYLNQHQHKSLLRFLTCGSVDDGKSTLIGRLLHDSKQIYEDQLAAVHSDSQRVGTTGSRPDLALLVDGLQAEREQGITIDVAYRYFSTQKRKFIIADTPGHEQYTRNMATGASTCDLAVILIDARKGVLDQTRRHSFISNLLGLKHFVVAVNKMDLVEFSQQRFEEIKAEYLAFSKNLRGETDIQIIPISALEGDNVVELSQQMAWYQGPTLLEILEAVDVEKEKEAGEFRFPVQYVNRPNLDFRGFAGTISSGVVKVGDRITALPSGKSSTVARIVTFDGDLEQAQAGLAVTLTLADEIDISRGDLIVHHGANVELTNHLAADVVWMTEQPLQPGRDYDIKIAGKKTIGRVEHIHHQYDINNLSKHSAAELPLNGIGLCEWTFNESIALDNYQDCADTGGFIIIDRLTNVTVGAGMVSESLTEVTKASSDFSAFELELNALIRKHFPHWDAKDLSELLKK</sequence>
<proteinExistence type="inferred from homology"/>
<reference key="1">
    <citation type="journal article" date="2003" name="Genome Res.">
        <title>Comparative genome analysis of Vibrio vulnificus, a marine pathogen.</title>
        <authorList>
            <person name="Chen C.-Y."/>
            <person name="Wu K.-M."/>
            <person name="Chang Y.-C."/>
            <person name="Chang C.-H."/>
            <person name="Tsai H.-C."/>
            <person name="Liao T.-L."/>
            <person name="Liu Y.-M."/>
            <person name="Chen H.-J."/>
            <person name="Shen A.B.-T."/>
            <person name="Li J.-C."/>
            <person name="Su T.-L."/>
            <person name="Shao C.-P."/>
            <person name="Lee C.-T."/>
            <person name="Hor L.-I."/>
            <person name="Tsai S.-F."/>
        </authorList>
    </citation>
    <scope>NUCLEOTIDE SEQUENCE [LARGE SCALE GENOMIC DNA]</scope>
    <source>
        <strain>YJ016</strain>
    </source>
</reference>
<gene>
    <name evidence="2" type="primary">cysN</name>
    <name type="ordered locus">VV0412</name>
</gene>
<organism>
    <name type="scientific">Vibrio vulnificus (strain YJ016)</name>
    <dbReference type="NCBI Taxonomy" id="196600"/>
    <lineage>
        <taxon>Bacteria</taxon>
        <taxon>Pseudomonadati</taxon>
        <taxon>Pseudomonadota</taxon>
        <taxon>Gammaproteobacteria</taxon>
        <taxon>Vibrionales</taxon>
        <taxon>Vibrionaceae</taxon>
        <taxon>Vibrio</taxon>
    </lineage>
</organism>
<evidence type="ECO:0000250" key="1"/>
<evidence type="ECO:0000255" key="2">
    <source>
        <dbReference type="HAMAP-Rule" id="MF_00062"/>
    </source>
</evidence>
<dbReference type="EC" id="2.7.7.4" evidence="2"/>
<dbReference type="EMBL" id="BA000037">
    <property type="protein sequence ID" value="BAC93176.1"/>
    <property type="molecule type" value="Genomic_DNA"/>
</dbReference>
<dbReference type="RefSeq" id="WP_011149357.1">
    <property type="nucleotide sequence ID" value="NC_005139.1"/>
</dbReference>
<dbReference type="SMR" id="Q7MPF2"/>
<dbReference type="STRING" id="672.VV93_v1c03820"/>
<dbReference type="KEGG" id="vvy:VV0412"/>
<dbReference type="PATRIC" id="fig|196600.6.peg.444"/>
<dbReference type="eggNOG" id="COG2895">
    <property type="taxonomic scope" value="Bacteria"/>
</dbReference>
<dbReference type="HOGENOM" id="CLU_007265_5_2_6"/>
<dbReference type="UniPathway" id="UPA00140">
    <property type="reaction ID" value="UER00204"/>
</dbReference>
<dbReference type="Proteomes" id="UP000002675">
    <property type="component" value="Chromosome I"/>
</dbReference>
<dbReference type="GO" id="GO:0005524">
    <property type="term" value="F:ATP binding"/>
    <property type="evidence" value="ECO:0007669"/>
    <property type="project" value="UniProtKB-KW"/>
</dbReference>
<dbReference type="GO" id="GO:0005525">
    <property type="term" value="F:GTP binding"/>
    <property type="evidence" value="ECO:0007669"/>
    <property type="project" value="UniProtKB-UniRule"/>
</dbReference>
<dbReference type="GO" id="GO:0003924">
    <property type="term" value="F:GTPase activity"/>
    <property type="evidence" value="ECO:0007669"/>
    <property type="project" value="InterPro"/>
</dbReference>
<dbReference type="GO" id="GO:0097216">
    <property type="term" value="F:guanosine tetraphosphate binding"/>
    <property type="evidence" value="ECO:0007669"/>
    <property type="project" value="UniProtKB-ARBA"/>
</dbReference>
<dbReference type="GO" id="GO:0004781">
    <property type="term" value="F:sulfate adenylyltransferase (ATP) activity"/>
    <property type="evidence" value="ECO:0007669"/>
    <property type="project" value="UniProtKB-UniRule"/>
</dbReference>
<dbReference type="GO" id="GO:0070814">
    <property type="term" value="P:hydrogen sulfide biosynthetic process"/>
    <property type="evidence" value="ECO:0007669"/>
    <property type="project" value="UniProtKB-UniRule"/>
</dbReference>
<dbReference type="GO" id="GO:0000103">
    <property type="term" value="P:sulfate assimilation"/>
    <property type="evidence" value="ECO:0007669"/>
    <property type="project" value="UniProtKB-UniRule"/>
</dbReference>
<dbReference type="CDD" id="cd04166">
    <property type="entry name" value="CysN_ATPS"/>
    <property type="match status" value="1"/>
</dbReference>
<dbReference type="CDD" id="cd03695">
    <property type="entry name" value="CysN_NodQ_II"/>
    <property type="match status" value="1"/>
</dbReference>
<dbReference type="CDD" id="cd04095">
    <property type="entry name" value="CysN_NoDQ_III"/>
    <property type="match status" value="1"/>
</dbReference>
<dbReference type="FunFam" id="2.40.30.10:FF:000027">
    <property type="entry name" value="Sulfate adenylyltransferase subunit 1"/>
    <property type="match status" value="1"/>
</dbReference>
<dbReference type="FunFam" id="2.40.30.10:FF:000031">
    <property type="entry name" value="Sulfate adenylyltransferase subunit 1"/>
    <property type="match status" value="1"/>
</dbReference>
<dbReference type="FunFam" id="3.40.50.300:FF:000119">
    <property type="entry name" value="Sulfate adenylyltransferase subunit 1"/>
    <property type="match status" value="1"/>
</dbReference>
<dbReference type="Gene3D" id="3.40.50.300">
    <property type="entry name" value="P-loop containing nucleotide triphosphate hydrolases"/>
    <property type="match status" value="1"/>
</dbReference>
<dbReference type="Gene3D" id="2.40.30.10">
    <property type="entry name" value="Translation factors"/>
    <property type="match status" value="2"/>
</dbReference>
<dbReference type="HAMAP" id="MF_00062">
    <property type="entry name" value="Sulf_adenylyltr_sub1"/>
    <property type="match status" value="1"/>
</dbReference>
<dbReference type="InterPro" id="IPR041757">
    <property type="entry name" value="CysN_GTP-bd"/>
</dbReference>
<dbReference type="InterPro" id="IPR044138">
    <property type="entry name" value="CysN_II"/>
</dbReference>
<dbReference type="InterPro" id="IPR044139">
    <property type="entry name" value="CysN_NoDQ_III"/>
</dbReference>
<dbReference type="InterPro" id="IPR004161">
    <property type="entry name" value="EFTu-like_2"/>
</dbReference>
<dbReference type="InterPro" id="IPR031157">
    <property type="entry name" value="G_TR_CS"/>
</dbReference>
<dbReference type="InterPro" id="IPR054696">
    <property type="entry name" value="GTP-eEF1A_C"/>
</dbReference>
<dbReference type="InterPro" id="IPR027417">
    <property type="entry name" value="P-loop_NTPase"/>
</dbReference>
<dbReference type="InterPro" id="IPR005225">
    <property type="entry name" value="Small_GTP-bd"/>
</dbReference>
<dbReference type="InterPro" id="IPR011779">
    <property type="entry name" value="SO4_adenylTrfase_lsu"/>
</dbReference>
<dbReference type="InterPro" id="IPR000795">
    <property type="entry name" value="T_Tr_GTP-bd_dom"/>
</dbReference>
<dbReference type="InterPro" id="IPR050100">
    <property type="entry name" value="TRAFAC_GTPase_members"/>
</dbReference>
<dbReference type="InterPro" id="IPR009000">
    <property type="entry name" value="Transl_B-barrel_sf"/>
</dbReference>
<dbReference type="InterPro" id="IPR009001">
    <property type="entry name" value="Transl_elong_EF1A/Init_IF2_C"/>
</dbReference>
<dbReference type="NCBIfam" id="TIGR02034">
    <property type="entry name" value="CysN"/>
    <property type="match status" value="1"/>
</dbReference>
<dbReference type="NCBIfam" id="NF003478">
    <property type="entry name" value="PRK05124.1"/>
    <property type="match status" value="1"/>
</dbReference>
<dbReference type="NCBIfam" id="TIGR00231">
    <property type="entry name" value="small_GTP"/>
    <property type="match status" value="1"/>
</dbReference>
<dbReference type="PANTHER" id="PTHR23115">
    <property type="entry name" value="TRANSLATION FACTOR"/>
    <property type="match status" value="1"/>
</dbReference>
<dbReference type="Pfam" id="PF22594">
    <property type="entry name" value="GTP-eEF1A_C"/>
    <property type="match status" value="1"/>
</dbReference>
<dbReference type="Pfam" id="PF00009">
    <property type="entry name" value="GTP_EFTU"/>
    <property type="match status" value="1"/>
</dbReference>
<dbReference type="Pfam" id="PF03144">
    <property type="entry name" value="GTP_EFTU_D2"/>
    <property type="match status" value="1"/>
</dbReference>
<dbReference type="PRINTS" id="PR00315">
    <property type="entry name" value="ELONGATNFCT"/>
</dbReference>
<dbReference type="SUPFAM" id="SSF50465">
    <property type="entry name" value="EF-Tu/eEF-1alpha/eIF2-gamma C-terminal domain"/>
    <property type="match status" value="1"/>
</dbReference>
<dbReference type="SUPFAM" id="SSF52540">
    <property type="entry name" value="P-loop containing nucleoside triphosphate hydrolases"/>
    <property type="match status" value="1"/>
</dbReference>
<dbReference type="SUPFAM" id="SSF50447">
    <property type="entry name" value="Translation proteins"/>
    <property type="match status" value="1"/>
</dbReference>
<dbReference type="PROSITE" id="PS00301">
    <property type="entry name" value="G_TR_1"/>
    <property type="match status" value="1"/>
</dbReference>
<dbReference type="PROSITE" id="PS51722">
    <property type="entry name" value="G_TR_2"/>
    <property type="match status" value="1"/>
</dbReference>
<feature type="chain" id="PRO_0000091535" description="Sulfate adenylyltransferase subunit 1">
    <location>
        <begin position="1"/>
        <end position="476"/>
    </location>
</feature>
<feature type="domain" description="tr-type G">
    <location>
        <begin position="24"/>
        <end position="243"/>
    </location>
</feature>
<feature type="region of interest" description="G1" evidence="1">
    <location>
        <begin position="33"/>
        <end position="40"/>
    </location>
</feature>
<feature type="region of interest" description="G2" evidence="1">
    <location>
        <begin position="91"/>
        <end position="95"/>
    </location>
</feature>
<feature type="region of interest" description="G3" evidence="1">
    <location>
        <begin position="112"/>
        <end position="115"/>
    </location>
</feature>
<feature type="region of interest" description="G4" evidence="1">
    <location>
        <begin position="167"/>
        <end position="170"/>
    </location>
</feature>
<feature type="region of interest" description="G5" evidence="1">
    <location>
        <begin position="205"/>
        <end position="207"/>
    </location>
</feature>
<feature type="binding site" evidence="2">
    <location>
        <begin position="33"/>
        <end position="40"/>
    </location>
    <ligand>
        <name>GTP</name>
        <dbReference type="ChEBI" id="CHEBI:37565"/>
    </ligand>
</feature>
<feature type="binding site" evidence="2">
    <location>
        <begin position="112"/>
        <end position="116"/>
    </location>
    <ligand>
        <name>GTP</name>
        <dbReference type="ChEBI" id="CHEBI:37565"/>
    </ligand>
</feature>
<feature type="binding site" evidence="2">
    <location>
        <begin position="167"/>
        <end position="170"/>
    </location>
    <ligand>
        <name>GTP</name>
        <dbReference type="ChEBI" id="CHEBI:37565"/>
    </ligand>
</feature>
<comment type="function">
    <text evidence="2">With CysD forms the ATP sulfurylase (ATPS) that catalyzes the adenylation of sulfate producing adenosine 5'-phosphosulfate (APS) and diphosphate, the first enzymatic step in sulfur assimilation pathway. APS synthesis involves the formation of a high-energy phosphoric-sulfuric acid anhydride bond driven by GTP hydrolysis by CysN coupled to ATP hydrolysis by CysD.</text>
</comment>
<comment type="catalytic activity">
    <reaction evidence="2">
        <text>sulfate + ATP + H(+) = adenosine 5'-phosphosulfate + diphosphate</text>
        <dbReference type="Rhea" id="RHEA:18133"/>
        <dbReference type="ChEBI" id="CHEBI:15378"/>
        <dbReference type="ChEBI" id="CHEBI:16189"/>
        <dbReference type="ChEBI" id="CHEBI:30616"/>
        <dbReference type="ChEBI" id="CHEBI:33019"/>
        <dbReference type="ChEBI" id="CHEBI:58243"/>
        <dbReference type="EC" id="2.7.7.4"/>
    </reaction>
</comment>
<comment type="pathway">
    <text evidence="2">Sulfur metabolism; hydrogen sulfide biosynthesis; sulfite from sulfate: step 1/3.</text>
</comment>
<comment type="subunit">
    <text evidence="2">Heterodimer composed of CysD, the smaller subunit, and CysN.</text>
</comment>
<comment type="similarity">
    <text evidence="2">Belongs to the TRAFAC class translation factor GTPase superfamily. Classic translation factor GTPase family. CysN/NodQ subfamily.</text>
</comment>
<protein>
    <recommendedName>
        <fullName evidence="2">Sulfate adenylyltransferase subunit 1</fullName>
        <ecNumber evidence="2">2.7.7.4</ecNumber>
    </recommendedName>
    <alternativeName>
        <fullName evidence="2">ATP-sulfurylase large subunit</fullName>
    </alternativeName>
    <alternativeName>
        <fullName evidence="2">Sulfate adenylate transferase</fullName>
        <shortName evidence="2">SAT</shortName>
    </alternativeName>
</protein>
<name>CYSN_VIBVY</name>
<keyword id="KW-0067">ATP-binding</keyword>
<keyword id="KW-0342">GTP-binding</keyword>
<keyword id="KW-0547">Nucleotide-binding</keyword>
<keyword id="KW-0548">Nucleotidyltransferase</keyword>
<keyword id="KW-0808">Transferase</keyword>
<accession>Q7MPF2</accession>